<dbReference type="EC" id="2.3.1.16" evidence="1"/>
<dbReference type="EMBL" id="CP000964">
    <property type="protein sequence ID" value="ACI10560.1"/>
    <property type="molecule type" value="Genomic_DNA"/>
</dbReference>
<dbReference type="SMR" id="B5XVW1"/>
<dbReference type="KEGG" id="kpe:KPK_1415"/>
<dbReference type="HOGENOM" id="CLU_031026_2_0_6"/>
<dbReference type="UniPathway" id="UPA00659"/>
<dbReference type="Proteomes" id="UP000001734">
    <property type="component" value="Chromosome"/>
</dbReference>
<dbReference type="GO" id="GO:0005829">
    <property type="term" value="C:cytosol"/>
    <property type="evidence" value="ECO:0007669"/>
    <property type="project" value="TreeGrafter"/>
</dbReference>
<dbReference type="GO" id="GO:0003988">
    <property type="term" value="F:acetyl-CoA C-acyltransferase activity"/>
    <property type="evidence" value="ECO:0007669"/>
    <property type="project" value="UniProtKB-UniRule"/>
</dbReference>
<dbReference type="GO" id="GO:0006635">
    <property type="term" value="P:fatty acid beta-oxidation"/>
    <property type="evidence" value="ECO:0007669"/>
    <property type="project" value="UniProtKB-UniRule"/>
</dbReference>
<dbReference type="CDD" id="cd00751">
    <property type="entry name" value="thiolase"/>
    <property type="match status" value="1"/>
</dbReference>
<dbReference type="FunFam" id="3.40.47.10:FF:000011">
    <property type="entry name" value="3-ketoacyl-CoA thiolase"/>
    <property type="match status" value="1"/>
</dbReference>
<dbReference type="Gene3D" id="3.40.47.10">
    <property type="match status" value="1"/>
</dbReference>
<dbReference type="HAMAP" id="MF_01618">
    <property type="entry name" value="FadI"/>
    <property type="match status" value="1"/>
</dbReference>
<dbReference type="InterPro" id="IPR012806">
    <property type="entry name" value="Ac-CoA_C-AcTrfase_FadI"/>
</dbReference>
<dbReference type="InterPro" id="IPR002155">
    <property type="entry name" value="Thiolase"/>
</dbReference>
<dbReference type="InterPro" id="IPR016039">
    <property type="entry name" value="Thiolase-like"/>
</dbReference>
<dbReference type="InterPro" id="IPR020615">
    <property type="entry name" value="Thiolase_acyl_enz_int_AS"/>
</dbReference>
<dbReference type="InterPro" id="IPR020610">
    <property type="entry name" value="Thiolase_AS"/>
</dbReference>
<dbReference type="InterPro" id="IPR020617">
    <property type="entry name" value="Thiolase_C"/>
</dbReference>
<dbReference type="InterPro" id="IPR020613">
    <property type="entry name" value="Thiolase_CS"/>
</dbReference>
<dbReference type="InterPro" id="IPR020616">
    <property type="entry name" value="Thiolase_N"/>
</dbReference>
<dbReference type="NCBIfam" id="TIGR01930">
    <property type="entry name" value="AcCoA-C-Actrans"/>
    <property type="match status" value="1"/>
</dbReference>
<dbReference type="NCBIfam" id="TIGR02446">
    <property type="entry name" value="FadI"/>
    <property type="match status" value="1"/>
</dbReference>
<dbReference type="NCBIfam" id="NF006516">
    <property type="entry name" value="PRK08963.1"/>
    <property type="match status" value="1"/>
</dbReference>
<dbReference type="PANTHER" id="PTHR18919:SF107">
    <property type="entry name" value="ACETYL-COA ACETYLTRANSFERASE, CYTOSOLIC"/>
    <property type="match status" value="1"/>
</dbReference>
<dbReference type="PANTHER" id="PTHR18919">
    <property type="entry name" value="ACETYL-COA C-ACYLTRANSFERASE"/>
    <property type="match status" value="1"/>
</dbReference>
<dbReference type="Pfam" id="PF02803">
    <property type="entry name" value="Thiolase_C"/>
    <property type="match status" value="1"/>
</dbReference>
<dbReference type="Pfam" id="PF00108">
    <property type="entry name" value="Thiolase_N"/>
    <property type="match status" value="1"/>
</dbReference>
<dbReference type="PIRSF" id="PIRSF000429">
    <property type="entry name" value="Ac-CoA_Ac_transf"/>
    <property type="match status" value="1"/>
</dbReference>
<dbReference type="SUPFAM" id="SSF53901">
    <property type="entry name" value="Thiolase-like"/>
    <property type="match status" value="2"/>
</dbReference>
<dbReference type="PROSITE" id="PS00098">
    <property type="entry name" value="THIOLASE_1"/>
    <property type="match status" value="1"/>
</dbReference>
<dbReference type="PROSITE" id="PS00737">
    <property type="entry name" value="THIOLASE_2"/>
    <property type="match status" value="1"/>
</dbReference>
<dbReference type="PROSITE" id="PS00099">
    <property type="entry name" value="THIOLASE_3"/>
    <property type="match status" value="1"/>
</dbReference>
<feature type="chain" id="PRO_1000185970" description="3-ketoacyl-CoA thiolase">
    <location>
        <begin position="1"/>
        <end position="436"/>
    </location>
</feature>
<feature type="active site" description="Acyl-thioester intermediate" evidence="1">
    <location>
        <position position="99"/>
    </location>
</feature>
<feature type="active site" description="Proton acceptor" evidence="1">
    <location>
        <position position="392"/>
    </location>
</feature>
<feature type="active site" description="Proton acceptor" evidence="1">
    <location>
        <position position="422"/>
    </location>
</feature>
<protein>
    <recommendedName>
        <fullName evidence="1">3-ketoacyl-CoA thiolase</fullName>
        <ecNumber evidence="1">2.3.1.16</ecNumber>
    </recommendedName>
    <alternativeName>
        <fullName evidence="1">ACSs</fullName>
    </alternativeName>
    <alternativeName>
        <fullName evidence="1">Acetyl-CoA acyltransferase</fullName>
    </alternativeName>
    <alternativeName>
        <fullName evidence="1">Acyl-CoA ligase</fullName>
    </alternativeName>
    <alternativeName>
        <fullName evidence="1">Beta-ketothiolase</fullName>
    </alternativeName>
    <alternativeName>
        <fullName evidence="1">Fatty acid oxidation complex subunit beta</fullName>
    </alternativeName>
</protein>
<reference key="1">
    <citation type="journal article" date="2008" name="PLoS Genet.">
        <title>Complete genome sequence of the N2-fixing broad host range endophyte Klebsiella pneumoniae 342 and virulence predictions verified in mice.</title>
        <authorList>
            <person name="Fouts D.E."/>
            <person name="Tyler H.L."/>
            <person name="DeBoy R.T."/>
            <person name="Daugherty S."/>
            <person name="Ren Q."/>
            <person name="Badger J.H."/>
            <person name="Durkin A.S."/>
            <person name="Huot H."/>
            <person name="Shrivastava S."/>
            <person name="Kothari S."/>
            <person name="Dodson R.J."/>
            <person name="Mohamoud Y."/>
            <person name="Khouri H."/>
            <person name="Roesch L.F.W."/>
            <person name="Krogfelt K.A."/>
            <person name="Struve C."/>
            <person name="Triplett E.W."/>
            <person name="Methe B.A."/>
        </authorList>
    </citation>
    <scope>NUCLEOTIDE SEQUENCE [LARGE SCALE GENOMIC DNA]</scope>
    <source>
        <strain>342</strain>
    </source>
</reference>
<keyword id="KW-0012">Acyltransferase</keyword>
<keyword id="KW-0963">Cytoplasm</keyword>
<keyword id="KW-0276">Fatty acid metabolism</keyword>
<keyword id="KW-0442">Lipid degradation</keyword>
<keyword id="KW-0443">Lipid metabolism</keyword>
<keyword id="KW-0808">Transferase</keyword>
<gene>
    <name evidence="1" type="primary">fadI</name>
    <name type="ordered locus">KPK_1415</name>
</gene>
<sequence length="436" mass="46561">MSQALPLITRQGDRIAIVRGLRTPFARQATVFHGVPAVDLGKMVVGEMLARSDIPADVIEQLVFGQVVQMPEAPNIAREIVLGTGMSVHTDAYSVSRACATSFQAVANVAESLMAGTIRAGIAGGADSSSVLPIGVSKTLARTLVDANKARTLSQKLKLFSRLRPRDLLPVPPAVAEYSTGLRMGDTAEQMAKSWGITREQQDALAHRSHQLAAKAWEEGKLSAEVMTAYAPPFREPLEQDNNIRKNSTLADYQKLRPAFDRKHGTVTAANSTPLTDGAAAVILMTESRAKELGLTPLGYLRSYAFTAIDVWQDMLLGPAWSTPLALERAGLTLADLTLIDMHEAFAAQTLANLQCLASERFAREVLGRSQATGEVDESKFNVLGGSIAYGHPFAATGARMITQTLHELRRRGGGFGLVTACAAGGLGAAMIVEAE</sequence>
<organism>
    <name type="scientific">Klebsiella pneumoniae (strain 342)</name>
    <dbReference type="NCBI Taxonomy" id="507522"/>
    <lineage>
        <taxon>Bacteria</taxon>
        <taxon>Pseudomonadati</taxon>
        <taxon>Pseudomonadota</taxon>
        <taxon>Gammaproteobacteria</taxon>
        <taxon>Enterobacterales</taxon>
        <taxon>Enterobacteriaceae</taxon>
        <taxon>Klebsiella/Raoultella group</taxon>
        <taxon>Klebsiella</taxon>
        <taxon>Klebsiella pneumoniae complex</taxon>
    </lineage>
</organism>
<name>FADI_KLEP3</name>
<comment type="function">
    <text evidence="1">Catalyzes the final step of fatty acid oxidation in which acetyl-CoA is released and the CoA ester of a fatty acid two carbons shorter is formed.</text>
</comment>
<comment type="catalytic activity">
    <reaction evidence="1">
        <text>an acyl-CoA + acetyl-CoA = a 3-oxoacyl-CoA + CoA</text>
        <dbReference type="Rhea" id="RHEA:21564"/>
        <dbReference type="ChEBI" id="CHEBI:57287"/>
        <dbReference type="ChEBI" id="CHEBI:57288"/>
        <dbReference type="ChEBI" id="CHEBI:58342"/>
        <dbReference type="ChEBI" id="CHEBI:90726"/>
        <dbReference type="EC" id="2.3.1.16"/>
    </reaction>
</comment>
<comment type="pathway">
    <text evidence="1">Lipid metabolism; fatty acid beta-oxidation.</text>
</comment>
<comment type="subunit">
    <text evidence="1">Heterotetramer of two alpha chains (FadJ) and two beta chains (FadI).</text>
</comment>
<comment type="subcellular location">
    <subcellularLocation>
        <location evidence="1">Cytoplasm</location>
    </subcellularLocation>
</comment>
<comment type="similarity">
    <text evidence="1">Belongs to the thiolase-like superfamily. Thiolase family.</text>
</comment>
<accession>B5XVW1</accession>
<evidence type="ECO:0000255" key="1">
    <source>
        <dbReference type="HAMAP-Rule" id="MF_01618"/>
    </source>
</evidence>
<proteinExistence type="inferred from homology"/>